<dbReference type="EC" id="2.7.7.23" evidence="1"/>
<dbReference type="EC" id="2.3.1.157" evidence="1"/>
<dbReference type="EMBL" id="AE014292">
    <property type="protein sequence ID" value="AAN33772.1"/>
    <property type="molecule type" value="Genomic_DNA"/>
</dbReference>
<dbReference type="EMBL" id="CP002998">
    <property type="protein sequence ID" value="AEM20049.1"/>
    <property type="molecule type" value="Genomic_DNA"/>
</dbReference>
<dbReference type="RefSeq" id="WP_004689006.1">
    <property type="nucleotide sequence ID" value="NZ_KN046805.1"/>
</dbReference>
<dbReference type="SMR" id="Q8FW78"/>
<dbReference type="GeneID" id="97535293"/>
<dbReference type="KEGG" id="bms:BRA0583"/>
<dbReference type="KEGG" id="bsi:BS1330_II0578"/>
<dbReference type="PATRIC" id="fig|204722.21.peg.559"/>
<dbReference type="HOGENOM" id="CLU_029499_15_2_5"/>
<dbReference type="PhylomeDB" id="Q8FW78"/>
<dbReference type="UniPathway" id="UPA00113">
    <property type="reaction ID" value="UER00532"/>
</dbReference>
<dbReference type="UniPathway" id="UPA00113">
    <property type="reaction ID" value="UER00533"/>
</dbReference>
<dbReference type="UniPathway" id="UPA00973"/>
<dbReference type="Proteomes" id="UP000007104">
    <property type="component" value="Chromosome II"/>
</dbReference>
<dbReference type="GO" id="GO:0005737">
    <property type="term" value="C:cytoplasm"/>
    <property type="evidence" value="ECO:0007669"/>
    <property type="project" value="UniProtKB-SubCell"/>
</dbReference>
<dbReference type="GO" id="GO:0016020">
    <property type="term" value="C:membrane"/>
    <property type="evidence" value="ECO:0007669"/>
    <property type="project" value="GOC"/>
</dbReference>
<dbReference type="GO" id="GO:0019134">
    <property type="term" value="F:glucosamine-1-phosphate N-acetyltransferase activity"/>
    <property type="evidence" value="ECO:0007669"/>
    <property type="project" value="UniProtKB-UniRule"/>
</dbReference>
<dbReference type="GO" id="GO:0000287">
    <property type="term" value="F:magnesium ion binding"/>
    <property type="evidence" value="ECO:0007669"/>
    <property type="project" value="UniProtKB-UniRule"/>
</dbReference>
<dbReference type="GO" id="GO:0003977">
    <property type="term" value="F:UDP-N-acetylglucosamine diphosphorylase activity"/>
    <property type="evidence" value="ECO:0007669"/>
    <property type="project" value="UniProtKB-UniRule"/>
</dbReference>
<dbReference type="GO" id="GO:0000902">
    <property type="term" value="P:cell morphogenesis"/>
    <property type="evidence" value="ECO:0007669"/>
    <property type="project" value="UniProtKB-UniRule"/>
</dbReference>
<dbReference type="GO" id="GO:0071555">
    <property type="term" value="P:cell wall organization"/>
    <property type="evidence" value="ECO:0007669"/>
    <property type="project" value="UniProtKB-KW"/>
</dbReference>
<dbReference type="GO" id="GO:0009245">
    <property type="term" value="P:lipid A biosynthetic process"/>
    <property type="evidence" value="ECO:0007669"/>
    <property type="project" value="UniProtKB-UniRule"/>
</dbReference>
<dbReference type="GO" id="GO:0009252">
    <property type="term" value="P:peptidoglycan biosynthetic process"/>
    <property type="evidence" value="ECO:0007669"/>
    <property type="project" value="UniProtKB-UniRule"/>
</dbReference>
<dbReference type="GO" id="GO:0008360">
    <property type="term" value="P:regulation of cell shape"/>
    <property type="evidence" value="ECO:0007669"/>
    <property type="project" value="UniProtKB-KW"/>
</dbReference>
<dbReference type="GO" id="GO:0006048">
    <property type="term" value="P:UDP-N-acetylglucosamine biosynthetic process"/>
    <property type="evidence" value="ECO:0007669"/>
    <property type="project" value="UniProtKB-UniPathway"/>
</dbReference>
<dbReference type="CDD" id="cd02540">
    <property type="entry name" value="GT2_GlmU_N_bac"/>
    <property type="match status" value="1"/>
</dbReference>
<dbReference type="CDD" id="cd03353">
    <property type="entry name" value="LbH_GlmU_C"/>
    <property type="match status" value="1"/>
</dbReference>
<dbReference type="Gene3D" id="2.160.10.10">
    <property type="entry name" value="Hexapeptide repeat proteins"/>
    <property type="match status" value="1"/>
</dbReference>
<dbReference type="Gene3D" id="3.90.550.10">
    <property type="entry name" value="Spore Coat Polysaccharide Biosynthesis Protein SpsA, Chain A"/>
    <property type="match status" value="1"/>
</dbReference>
<dbReference type="HAMAP" id="MF_01631">
    <property type="entry name" value="GlmU"/>
    <property type="match status" value="1"/>
</dbReference>
<dbReference type="InterPro" id="IPR005882">
    <property type="entry name" value="Bifunctional_GlmU"/>
</dbReference>
<dbReference type="InterPro" id="IPR050065">
    <property type="entry name" value="GlmU-like"/>
</dbReference>
<dbReference type="InterPro" id="IPR038009">
    <property type="entry name" value="GlmU_C_LbH"/>
</dbReference>
<dbReference type="InterPro" id="IPR001451">
    <property type="entry name" value="Hexapep"/>
</dbReference>
<dbReference type="InterPro" id="IPR018357">
    <property type="entry name" value="Hexapep_transf_CS"/>
</dbReference>
<dbReference type="InterPro" id="IPR025877">
    <property type="entry name" value="MobA-like_NTP_Trfase"/>
</dbReference>
<dbReference type="InterPro" id="IPR029044">
    <property type="entry name" value="Nucleotide-diphossugar_trans"/>
</dbReference>
<dbReference type="InterPro" id="IPR011004">
    <property type="entry name" value="Trimer_LpxA-like_sf"/>
</dbReference>
<dbReference type="NCBIfam" id="TIGR01173">
    <property type="entry name" value="glmU"/>
    <property type="match status" value="1"/>
</dbReference>
<dbReference type="NCBIfam" id="NF010933">
    <property type="entry name" value="PRK14353.1"/>
    <property type="match status" value="1"/>
</dbReference>
<dbReference type="PANTHER" id="PTHR43584:SF3">
    <property type="entry name" value="BIFUNCTIONAL PROTEIN GLMU"/>
    <property type="match status" value="1"/>
</dbReference>
<dbReference type="PANTHER" id="PTHR43584">
    <property type="entry name" value="NUCLEOTIDYL TRANSFERASE"/>
    <property type="match status" value="1"/>
</dbReference>
<dbReference type="Pfam" id="PF00132">
    <property type="entry name" value="Hexapep"/>
    <property type="match status" value="1"/>
</dbReference>
<dbReference type="Pfam" id="PF12804">
    <property type="entry name" value="NTP_transf_3"/>
    <property type="match status" value="1"/>
</dbReference>
<dbReference type="SUPFAM" id="SSF53448">
    <property type="entry name" value="Nucleotide-diphospho-sugar transferases"/>
    <property type="match status" value="1"/>
</dbReference>
<dbReference type="SUPFAM" id="SSF51161">
    <property type="entry name" value="Trimeric LpxA-like enzymes"/>
    <property type="match status" value="1"/>
</dbReference>
<dbReference type="PROSITE" id="PS00101">
    <property type="entry name" value="HEXAPEP_TRANSFERASES"/>
    <property type="match status" value="1"/>
</dbReference>
<keyword id="KW-0012">Acyltransferase</keyword>
<keyword id="KW-0133">Cell shape</keyword>
<keyword id="KW-0961">Cell wall biogenesis/degradation</keyword>
<keyword id="KW-0963">Cytoplasm</keyword>
<keyword id="KW-0460">Magnesium</keyword>
<keyword id="KW-0479">Metal-binding</keyword>
<keyword id="KW-0511">Multifunctional enzyme</keyword>
<keyword id="KW-0548">Nucleotidyltransferase</keyword>
<keyword id="KW-0573">Peptidoglycan synthesis</keyword>
<keyword id="KW-0677">Repeat</keyword>
<keyword id="KW-0808">Transferase</keyword>
<reference key="1">
    <citation type="journal article" date="2002" name="Proc. Natl. Acad. Sci. U.S.A.">
        <title>The Brucella suis genome reveals fundamental similarities between animal and plant pathogens and symbionts.</title>
        <authorList>
            <person name="Paulsen I.T."/>
            <person name="Seshadri R."/>
            <person name="Nelson K.E."/>
            <person name="Eisen J.A."/>
            <person name="Heidelberg J.F."/>
            <person name="Read T.D."/>
            <person name="Dodson R.J."/>
            <person name="Umayam L.A."/>
            <person name="Brinkac L.M."/>
            <person name="Beanan M.J."/>
            <person name="Daugherty S.C."/>
            <person name="DeBoy R.T."/>
            <person name="Durkin A.S."/>
            <person name="Kolonay J.F."/>
            <person name="Madupu R."/>
            <person name="Nelson W.C."/>
            <person name="Ayodeji B."/>
            <person name="Kraul M."/>
            <person name="Shetty J."/>
            <person name="Malek J.A."/>
            <person name="Van Aken S.E."/>
            <person name="Riedmuller S."/>
            <person name="Tettelin H."/>
            <person name="Gill S.R."/>
            <person name="White O."/>
            <person name="Salzberg S.L."/>
            <person name="Hoover D.L."/>
            <person name="Lindler L.E."/>
            <person name="Halling S.M."/>
            <person name="Boyle S.M."/>
            <person name="Fraser C.M."/>
        </authorList>
    </citation>
    <scope>NUCLEOTIDE SEQUENCE [LARGE SCALE GENOMIC DNA]</scope>
    <source>
        <strain>1330</strain>
    </source>
</reference>
<reference key="2">
    <citation type="journal article" date="2011" name="J. Bacteriol.">
        <title>Revised genome sequence of Brucella suis 1330.</title>
        <authorList>
            <person name="Tae H."/>
            <person name="Shallom S."/>
            <person name="Settlage R."/>
            <person name="Preston D."/>
            <person name="Adams L.G."/>
            <person name="Garner H.R."/>
        </authorList>
    </citation>
    <scope>NUCLEOTIDE SEQUENCE [LARGE SCALE GENOMIC DNA]</scope>
    <source>
        <strain>1330</strain>
    </source>
</reference>
<gene>
    <name evidence="1" type="primary">glmU</name>
    <name type="ordered locus">BRA0583</name>
    <name type="ordered locus">BS1330_II0578</name>
</gene>
<proteinExistence type="inferred from homology"/>
<name>GLMU_BRUSU</name>
<feature type="chain" id="PRO_0000233746" description="Bifunctional protein GlmU">
    <location>
        <begin position="1"/>
        <end position="454"/>
    </location>
</feature>
<feature type="region of interest" description="Pyrophosphorylase" evidence="1">
    <location>
        <begin position="1"/>
        <end position="232"/>
    </location>
</feature>
<feature type="region of interest" description="Linker" evidence="1">
    <location>
        <begin position="233"/>
        <end position="253"/>
    </location>
</feature>
<feature type="region of interest" description="N-acetyltransferase" evidence="1">
    <location>
        <begin position="254"/>
        <end position="454"/>
    </location>
</feature>
<feature type="active site" description="Proton acceptor" evidence="1">
    <location>
        <position position="349"/>
    </location>
</feature>
<feature type="binding site" evidence="1">
    <location>
        <begin position="11"/>
        <end position="14"/>
    </location>
    <ligand>
        <name>UDP-N-acetyl-alpha-D-glucosamine</name>
        <dbReference type="ChEBI" id="CHEBI:57705"/>
    </ligand>
</feature>
<feature type="binding site" evidence="1">
    <location>
        <position position="25"/>
    </location>
    <ligand>
        <name>UDP-N-acetyl-alpha-D-glucosamine</name>
        <dbReference type="ChEBI" id="CHEBI:57705"/>
    </ligand>
</feature>
<feature type="binding site" evidence="1">
    <location>
        <position position="78"/>
    </location>
    <ligand>
        <name>UDP-N-acetyl-alpha-D-glucosamine</name>
        <dbReference type="ChEBI" id="CHEBI:57705"/>
    </ligand>
</feature>
<feature type="binding site" evidence="1">
    <location>
        <begin position="83"/>
        <end position="84"/>
    </location>
    <ligand>
        <name>UDP-N-acetyl-alpha-D-glucosamine</name>
        <dbReference type="ChEBI" id="CHEBI:57705"/>
    </ligand>
</feature>
<feature type="binding site" evidence="1">
    <location>
        <position position="108"/>
    </location>
    <ligand>
        <name>Mg(2+)</name>
        <dbReference type="ChEBI" id="CHEBI:18420"/>
    </ligand>
</feature>
<feature type="binding site" evidence="1">
    <location>
        <position position="144"/>
    </location>
    <ligand>
        <name>UDP-N-acetyl-alpha-D-glucosamine</name>
        <dbReference type="ChEBI" id="CHEBI:57705"/>
    </ligand>
</feature>
<feature type="binding site" evidence="1">
    <location>
        <position position="158"/>
    </location>
    <ligand>
        <name>UDP-N-acetyl-alpha-D-glucosamine</name>
        <dbReference type="ChEBI" id="CHEBI:57705"/>
    </ligand>
</feature>
<feature type="binding site" evidence="1">
    <location>
        <position position="173"/>
    </location>
    <ligand>
        <name>UDP-N-acetyl-alpha-D-glucosamine</name>
        <dbReference type="ChEBI" id="CHEBI:57705"/>
    </ligand>
</feature>
<feature type="binding site" evidence="1">
    <location>
        <position position="230"/>
    </location>
    <ligand>
        <name>Mg(2+)</name>
        <dbReference type="ChEBI" id="CHEBI:18420"/>
    </ligand>
</feature>
<feature type="binding site" evidence="1">
    <location>
        <position position="230"/>
    </location>
    <ligand>
        <name>UDP-N-acetyl-alpha-D-glucosamine</name>
        <dbReference type="ChEBI" id="CHEBI:57705"/>
    </ligand>
</feature>
<feature type="binding site" evidence="1">
    <location>
        <position position="319"/>
    </location>
    <ligand>
        <name>UDP-N-acetyl-alpha-D-glucosamine</name>
        <dbReference type="ChEBI" id="CHEBI:57705"/>
    </ligand>
</feature>
<feature type="binding site" evidence="1">
    <location>
        <position position="337"/>
    </location>
    <ligand>
        <name>UDP-N-acetyl-alpha-D-glucosamine</name>
        <dbReference type="ChEBI" id="CHEBI:57705"/>
    </ligand>
</feature>
<feature type="binding site" evidence="1">
    <location>
        <position position="352"/>
    </location>
    <ligand>
        <name>UDP-N-acetyl-alpha-D-glucosamine</name>
        <dbReference type="ChEBI" id="CHEBI:57705"/>
    </ligand>
</feature>
<feature type="binding site" evidence="1">
    <location>
        <position position="363"/>
    </location>
    <ligand>
        <name>UDP-N-acetyl-alpha-D-glucosamine</name>
        <dbReference type="ChEBI" id="CHEBI:57705"/>
    </ligand>
</feature>
<feature type="binding site" evidence="1">
    <location>
        <position position="366"/>
    </location>
    <ligand>
        <name>acetyl-CoA</name>
        <dbReference type="ChEBI" id="CHEBI:57288"/>
    </ligand>
</feature>
<feature type="binding site" evidence="1">
    <location>
        <begin position="372"/>
        <end position="373"/>
    </location>
    <ligand>
        <name>acetyl-CoA</name>
        <dbReference type="ChEBI" id="CHEBI:57288"/>
    </ligand>
</feature>
<feature type="binding site" evidence="1">
    <location>
        <position position="391"/>
    </location>
    <ligand>
        <name>acetyl-CoA</name>
        <dbReference type="ChEBI" id="CHEBI:57288"/>
    </ligand>
</feature>
<feature type="binding site" evidence="1">
    <location>
        <position position="409"/>
    </location>
    <ligand>
        <name>acetyl-CoA</name>
        <dbReference type="ChEBI" id="CHEBI:57288"/>
    </ligand>
</feature>
<feature type="binding site" evidence="1">
    <location>
        <position position="426"/>
    </location>
    <ligand>
        <name>acetyl-CoA</name>
        <dbReference type="ChEBI" id="CHEBI:57288"/>
    </ligand>
</feature>
<organism>
    <name type="scientific">Brucella suis biovar 1 (strain 1330)</name>
    <dbReference type="NCBI Taxonomy" id="204722"/>
    <lineage>
        <taxon>Bacteria</taxon>
        <taxon>Pseudomonadati</taxon>
        <taxon>Pseudomonadota</taxon>
        <taxon>Alphaproteobacteria</taxon>
        <taxon>Hyphomicrobiales</taxon>
        <taxon>Brucellaceae</taxon>
        <taxon>Brucella/Ochrobactrum group</taxon>
        <taxon>Brucella</taxon>
    </lineage>
</organism>
<accession>Q8FW78</accession>
<accession>G0KCW1</accession>
<comment type="function">
    <text evidence="1">Catalyzes the last two sequential reactions in the de novo biosynthetic pathway for UDP-N-acetylglucosamine (UDP-GlcNAc). The C-terminal domain catalyzes the transfer of acetyl group from acetyl coenzyme A to glucosamine-1-phosphate (GlcN-1-P) to produce N-acetylglucosamine-1-phosphate (GlcNAc-1-P), which is converted into UDP-GlcNAc by the transfer of uridine 5-monophosphate (from uridine 5-triphosphate), a reaction catalyzed by the N-terminal domain.</text>
</comment>
<comment type="catalytic activity">
    <reaction evidence="1">
        <text>alpha-D-glucosamine 1-phosphate + acetyl-CoA = N-acetyl-alpha-D-glucosamine 1-phosphate + CoA + H(+)</text>
        <dbReference type="Rhea" id="RHEA:13725"/>
        <dbReference type="ChEBI" id="CHEBI:15378"/>
        <dbReference type="ChEBI" id="CHEBI:57287"/>
        <dbReference type="ChEBI" id="CHEBI:57288"/>
        <dbReference type="ChEBI" id="CHEBI:57776"/>
        <dbReference type="ChEBI" id="CHEBI:58516"/>
        <dbReference type="EC" id="2.3.1.157"/>
    </reaction>
</comment>
<comment type="catalytic activity">
    <reaction evidence="1">
        <text>N-acetyl-alpha-D-glucosamine 1-phosphate + UTP + H(+) = UDP-N-acetyl-alpha-D-glucosamine + diphosphate</text>
        <dbReference type="Rhea" id="RHEA:13509"/>
        <dbReference type="ChEBI" id="CHEBI:15378"/>
        <dbReference type="ChEBI" id="CHEBI:33019"/>
        <dbReference type="ChEBI" id="CHEBI:46398"/>
        <dbReference type="ChEBI" id="CHEBI:57705"/>
        <dbReference type="ChEBI" id="CHEBI:57776"/>
        <dbReference type="EC" id="2.7.7.23"/>
    </reaction>
</comment>
<comment type="cofactor">
    <cofactor evidence="1">
        <name>Mg(2+)</name>
        <dbReference type="ChEBI" id="CHEBI:18420"/>
    </cofactor>
    <text evidence="1">Binds 1 Mg(2+) ion per subunit.</text>
</comment>
<comment type="pathway">
    <text evidence="1">Nucleotide-sugar biosynthesis; UDP-N-acetyl-alpha-D-glucosamine biosynthesis; N-acetyl-alpha-D-glucosamine 1-phosphate from alpha-D-glucosamine 6-phosphate (route II): step 2/2.</text>
</comment>
<comment type="pathway">
    <text evidence="1">Nucleotide-sugar biosynthesis; UDP-N-acetyl-alpha-D-glucosamine biosynthesis; UDP-N-acetyl-alpha-D-glucosamine from N-acetyl-alpha-D-glucosamine 1-phosphate: step 1/1.</text>
</comment>
<comment type="pathway">
    <text evidence="1">Bacterial outer membrane biogenesis; LPS lipid A biosynthesis.</text>
</comment>
<comment type="subunit">
    <text evidence="1">Homotrimer.</text>
</comment>
<comment type="subcellular location">
    <subcellularLocation>
        <location evidence="1">Cytoplasm</location>
    </subcellularLocation>
</comment>
<comment type="similarity">
    <text evidence="1">In the N-terminal section; belongs to the N-acetylglucosamine-1-phosphate uridyltransferase family.</text>
</comment>
<comment type="similarity">
    <text evidence="1">In the C-terminal section; belongs to the transferase hexapeptide repeat family.</text>
</comment>
<evidence type="ECO:0000255" key="1">
    <source>
        <dbReference type="HAMAP-Rule" id="MF_01631"/>
    </source>
</evidence>
<sequence>MTDRTCLSIVLAAGEGTRMKSNLPKVLHRVAGLPLVCHVVNAVRGTGKSDVALVVGRGAEDVRSAVEKIAGPVSAFEQKERLGTAHAVLAAREAIARGYDDLLIVFGDTPLIEAQSLLAARERLAQGADLVVIGFRPASPHGYGRLIEEGGQLVAIIEEKEATDEQKKIGFCNGGLMALRGQHALALLDAVGNDNAKGEYYLTDIVAIAHGKGLNVTAIEVPVDNVIGINNRAELAEAETIWQNRKRRELMLSGVTLIAPETVFFSYDTVIEPDVVIEPNVFFGPSVHVASGALIHSFSHLEGAQVGEKAEIGPFARLRPGADLAEKSKVGNFCEVKNAKVGKGAKINHLTYIGDAVIGASSNIGAGTITCNYDGYNKFKTIIGDNAFIGSNSSLVAPVEIGDNAYIASGSVITADVPADALALGRARQETKEGRAKILREKYAAIKAAKSVSK</sequence>
<protein>
    <recommendedName>
        <fullName evidence="1">Bifunctional protein GlmU</fullName>
    </recommendedName>
    <domain>
        <recommendedName>
            <fullName evidence="1">UDP-N-acetylglucosamine pyrophosphorylase</fullName>
            <ecNumber evidence="1">2.7.7.23</ecNumber>
        </recommendedName>
        <alternativeName>
            <fullName evidence="1">N-acetylglucosamine-1-phosphate uridyltransferase</fullName>
        </alternativeName>
    </domain>
    <domain>
        <recommendedName>
            <fullName evidence="1">Glucosamine-1-phosphate N-acetyltransferase</fullName>
            <ecNumber evidence="1">2.3.1.157</ecNumber>
        </recommendedName>
    </domain>
</protein>